<comment type="function">
    <text evidence="1">Component of the 20S core proteasome complex involved in the proteolytic degradation of most intracellular proteins. This complex plays numerous essential roles within the cell by associating with different regulatory particles. Associated with two 19S regulatory particles, forms the 26S proteasome and thus participates in the ATP-dependent degradation of ubiquitinated proteins. The 26S proteasome plays a key role in the maintenance of protein homeostasis by removing misfolded or damaged proteins that could impair cellular functions, and by removing proteins whose functions are no longer required. Associated with the PA200 or PA28, the 20S proteasome mediates ubiquitin-independent protein degradation. This type of proteolysis is required in several pathways including spermatogenesis (20S-PA200 complex) or generation of a subset of MHC class I-presented antigenic peptides (20S-PA28 complex).</text>
</comment>
<comment type="subunit">
    <text evidence="1">The 26S proteasome consists of a 20S proteasome core and two 19S regulatory subunits. The 20S proteasome core is a barrel-shaped complex made of 28 subunits that are arranged in four stacked rings. The two outer rings are each formed by seven alpha subunits, and the two inner rings are formed by seven beta subunits. The proteolytic activity is exerted by three beta-subunits PSMB5, PSMB6 and PSMB7.</text>
</comment>
<comment type="subcellular location">
    <subcellularLocation>
        <location evidence="1">Cytoplasm</location>
    </subcellularLocation>
    <subcellularLocation>
        <location evidence="1">Nucleus</location>
    </subcellularLocation>
    <text evidence="2">Colocalizes with TRIM5 in the cytoplasmic bodies.</text>
</comment>
<comment type="similarity">
    <text evidence="3">Belongs to the peptidase T1A family.</text>
</comment>
<accession>Q4R932</accession>
<proteinExistence type="evidence at transcript level"/>
<protein>
    <recommendedName>
        <fullName>Proteasome subunit alpha type-4</fullName>
    </recommendedName>
</protein>
<feature type="chain" id="PRO_0000124104" description="Proteasome subunit alpha type-4">
    <location>
        <begin position="1"/>
        <end position="261"/>
    </location>
</feature>
<feature type="region of interest" description="Disordered" evidence="4">
    <location>
        <begin position="240"/>
        <end position="261"/>
    </location>
</feature>
<feature type="modified residue" description="Phosphoserine" evidence="1">
    <location>
        <position position="13"/>
    </location>
</feature>
<feature type="modified residue" description="Phosphoserine" evidence="1">
    <location>
        <position position="75"/>
    </location>
</feature>
<feature type="modified residue" description="N6-acetyllysine" evidence="1">
    <location>
        <position position="127"/>
    </location>
</feature>
<feature type="modified residue" description="Phosphoserine" evidence="1">
    <location>
        <position position="173"/>
    </location>
</feature>
<feature type="modified residue" description="N6-acetyllysine" evidence="1">
    <location>
        <position position="176"/>
    </location>
</feature>
<keyword id="KW-0007">Acetylation</keyword>
<keyword id="KW-0963">Cytoplasm</keyword>
<keyword id="KW-0539">Nucleus</keyword>
<keyword id="KW-0597">Phosphoprotein</keyword>
<keyword id="KW-0647">Proteasome</keyword>
<keyword id="KW-1185">Reference proteome</keyword>
<name>PSA4_MACFA</name>
<organism>
    <name type="scientific">Macaca fascicularis</name>
    <name type="common">Crab-eating macaque</name>
    <name type="synonym">Cynomolgus monkey</name>
    <dbReference type="NCBI Taxonomy" id="9541"/>
    <lineage>
        <taxon>Eukaryota</taxon>
        <taxon>Metazoa</taxon>
        <taxon>Chordata</taxon>
        <taxon>Craniata</taxon>
        <taxon>Vertebrata</taxon>
        <taxon>Euteleostomi</taxon>
        <taxon>Mammalia</taxon>
        <taxon>Eutheria</taxon>
        <taxon>Euarchontoglires</taxon>
        <taxon>Primates</taxon>
        <taxon>Haplorrhini</taxon>
        <taxon>Catarrhini</taxon>
        <taxon>Cercopithecidae</taxon>
        <taxon>Cercopithecinae</taxon>
        <taxon>Macaca</taxon>
    </lineage>
</organism>
<reference key="1">
    <citation type="submission" date="2005-06" db="EMBL/GenBank/DDBJ databases">
        <title>DNA sequences of macaque genes expressed in brain or testis and its evolutionary implications.</title>
        <authorList>
            <consortium name="International consortium for macaque cDNA sequencing and analysis"/>
        </authorList>
    </citation>
    <scope>NUCLEOTIDE SEQUENCE [LARGE SCALE MRNA]</scope>
    <source>
        <tissue>Testis</tissue>
    </source>
</reference>
<gene>
    <name type="primary">PSMA4</name>
    <name type="ORF">QtsA-10816</name>
</gene>
<sequence length="261" mass="29511">MSRRYDSRTTIFSPEGRLYQVEYAMEAIGHAGTCLGILANDGVLLAAERRNIHKLLDEVFFSEKIYKLNEDMACSVAGITSDANVLTNELRLIAQRYLLQYQEPIPCEQLVTALCDIKQAYTQFGGKRPFGVSLLYIGWDKHYGFQLYQSDPNGNYGGWKATCIGNNSAAAVSMLKQDYKEGEMTLKSALALAIKVLNKTMDVSKLSAEKVEIATLTRENGKTVIRVLKQKEVEQLIKKHEEEEAKAEREKKEKEQKEKDK</sequence>
<evidence type="ECO:0000250" key="1">
    <source>
        <dbReference type="UniProtKB" id="P25789"/>
    </source>
</evidence>
<evidence type="ECO:0000250" key="2">
    <source>
        <dbReference type="UniProtKB" id="Q9R1P0"/>
    </source>
</evidence>
<evidence type="ECO:0000255" key="3">
    <source>
        <dbReference type="PROSITE-ProRule" id="PRU00808"/>
    </source>
</evidence>
<evidence type="ECO:0000256" key="4">
    <source>
        <dbReference type="SAM" id="MobiDB-lite"/>
    </source>
</evidence>
<dbReference type="EMBL" id="AB168265">
    <property type="protein sequence ID" value="BAE00389.1"/>
    <property type="molecule type" value="mRNA"/>
</dbReference>
<dbReference type="RefSeq" id="NP_001270171.1">
    <property type="nucleotide sequence ID" value="NM_001283242.1"/>
</dbReference>
<dbReference type="SMR" id="Q4R932"/>
<dbReference type="STRING" id="9541.ENSMFAP00000004922"/>
<dbReference type="MEROPS" id="T01.973"/>
<dbReference type="eggNOG" id="KOG0178">
    <property type="taxonomic scope" value="Eukaryota"/>
</dbReference>
<dbReference type="Proteomes" id="UP000233100">
    <property type="component" value="Unplaced"/>
</dbReference>
<dbReference type="GO" id="GO:0005634">
    <property type="term" value="C:nucleus"/>
    <property type="evidence" value="ECO:0007669"/>
    <property type="project" value="UniProtKB-SubCell"/>
</dbReference>
<dbReference type="GO" id="GO:0000932">
    <property type="term" value="C:P-body"/>
    <property type="evidence" value="ECO:0000250"/>
    <property type="project" value="UniProtKB"/>
</dbReference>
<dbReference type="GO" id="GO:0005839">
    <property type="term" value="C:proteasome core complex"/>
    <property type="evidence" value="ECO:0000250"/>
    <property type="project" value="UniProtKB"/>
</dbReference>
<dbReference type="GO" id="GO:0019773">
    <property type="term" value="C:proteasome core complex, alpha-subunit complex"/>
    <property type="evidence" value="ECO:0000250"/>
    <property type="project" value="UniProtKB"/>
</dbReference>
<dbReference type="GO" id="GO:0006511">
    <property type="term" value="P:ubiquitin-dependent protein catabolic process"/>
    <property type="evidence" value="ECO:0007669"/>
    <property type="project" value="InterPro"/>
</dbReference>
<dbReference type="CDD" id="cd03752">
    <property type="entry name" value="proteasome_alpha_type_4"/>
    <property type="match status" value="1"/>
</dbReference>
<dbReference type="FunFam" id="3.60.20.10:FF:000022">
    <property type="entry name" value="Proteasome subunit alpha type"/>
    <property type="match status" value="1"/>
</dbReference>
<dbReference type="Gene3D" id="3.60.20.10">
    <property type="entry name" value="Glutamine Phosphoribosylpyrophosphate, subunit 1, domain 1"/>
    <property type="match status" value="1"/>
</dbReference>
<dbReference type="InterPro" id="IPR029055">
    <property type="entry name" value="Ntn_hydrolases_N"/>
</dbReference>
<dbReference type="InterPro" id="IPR050115">
    <property type="entry name" value="Proteasome_alpha"/>
</dbReference>
<dbReference type="InterPro" id="IPR023332">
    <property type="entry name" value="Proteasome_alpha-type"/>
</dbReference>
<dbReference type="InterPro" id="IPR000426">
    <property type="entry name" value="Proteasome_asu_N"/>
</dbReference>
<dbReference type="InterPro" id="IPR016050">
    <property type="entry name" value="Proteasome_bsu_CS"/>
</dbReference>
<dbReference type="InterPro" id="IPR001353">
    <property type="entry name" value="Proteasome_sua/b"/>
</dbReference>
<dbReference type="NCBIfam" id="NF003075">
    <property type="entry name" value="PRK03996.1"/>
    <property type="match status" value="1"/>
</dbReference>
<dbReference type="PANTHER" id="PTHR11599">
    <property type="entry name" value="PROTEASOME SUBUNIT ALPHA/BETA"/>
    <property type="match status" value="1"/>
</dbReference>
<dbReference type="Pfam" id="PF00227">
    <property type="entry name" value="Proteasome"/>
    <property type="match status" value="1"/>
</dbReference>
<dbReference type="Pfam" id="PF10584">
    <property type="entry name" value="Proteasome_A_N"/>
    <property type="match status" value="1"/>
</dbReference>
<dbReference type="SMART" id="SM00948">
    <property type="entry name" value="Proteasome_A_N"/>
    <property type="match status" value="1"/>
</dbReference>
<dbReference type="SUPFAM" id="SSF56235">
    <property type="entry name" value="N-terminal nucleophile aminohydrolases (Ntn hydrolases)"/>
    <property type="match status" value="1"/>
</dbReference>
<dbReference type="PROSITE" id="PS00388">
    <property type="entry name" value="PROTEASOME_ALPHA_1"/>
    <property type="match status" value="1"/>
</dbReference>
<dbReference type="PROSITE" id="PS51475">
    <property type="entry name" value="PROTEASOME_ALPHA_2"/>
    <property type="match status" value="1"/>
</dbReference>